<name>PYRC_ACIBY</name>
<protein>
    <recommendedName>
        <fullName evidence="1">Dihydroorotase</fullName>
        <shortName evidence="1">DHOase</shortName>
        <ecNumber evidence="1">3.5.2.3</ecNumber>
    </recommendedName>
</protein>
<proteinExistence type="inferred from homology"/>
<feature type="chain" id="PRO_1000100035" description="Dihydroorotase">
    <location>
        <begin position="1"/>
        <end position="344"/>
    </location>
</feature>
<feature type="active site" evidence="1">
    <location>
        <position position="247"/>
    </location>
</feature>
<feature type="binding site" evidence="1">
    <location>
        <position position="13"/>
    </location>
    <ligand>
        <name>Zn(2+)</name>
        <dbReference type="ChEBI" id="CHEBI:29105"/>
        <label>1</label>
    </ligand>
</feature>
<feature type="binding site" evidence="1">
    <location>
        <begin position="15"/>
        <end position="17"/>
    </location>
    <ligand>
        <name>substrate</name>
    </ligand>
</feature>
<feature type="binding site" evidence="1">
    <location>
        <position position="15"/>
    </location>
    <ligand>
        <name>Zn(2+)</name>
        <dbReference type="ChEBI" id="CHEBI:29105"/>
        <label>1</label>
    </ligand>
</feature>
<feature type="binding site" evidence="1">
    <location>
        <position position="41"/>
    </location>
    <ligand>
        <name>substrate</name>
    </ligand>
</feature>
<feature type="binding site" description="via carbamate group" evidence="1">
    <location>
        <position position="99"/>
    </location>
    <ligand>
        <name>Zn(2+)</name>
        <dbReference type="ChEBI" id="CHEBI:29105"/>
        <label>1</label>
    </ligand>
</feature>
<feature type="binding site" description="via carbamate group" evidence="1">
    <location>
        <position position="99"/>
    </location>
    <ligand>
        <name>Zn(2+)</name>
        <dbReference type="ChEBI" id="CHEBI:29105"/>
        <label>2</label>
    </ligand>
</feature>
<feature type="binding site" evidence="1">
    <location>
        <position position="136"/>
    </location>
    <ligand>
        <name>substrate</name>
    </ligand>
</feature>
<feature type="binding site" evidence="1">
    <location>
        <position position="136"/>
    </location>
    <ligand>
        <name>Zn(2+)</name>
        <dbReference type="ChEBI" id="CHEBI:29105"/>
        <label>2</label>
    </ligand>
</feature>
<feature type="binding site" evidence="1">
    <location>
        <position position="174"/>
    </location>
    <ligand>
        <name>Zn(2+)</name>
        <dbReference type="ChEBI" id="CHEBI:29105"/>
        <label>2</label>
    </ligand>
</feature>
<feature type="binding site" evidence="1">
    <location>
        <position position="219"/>
    </location>
    <ligand>
        <name>substrate</name>
    </ligand>
</feature>
<feature type="binding site" evidence="1">
    <location>
        <position position="247"/>
    </location>
    <ligand>
        <name>Zn(2+)</name>
        <dbReference type="ChEBI" id="CHEBI:29105"/>
        <label>1</label>
    </ligand>
</feature>
<feature type="binding site" evidence="1">
    <location>
        <position position="251"/>
    </location>
    <ligand>
        <name>substrate</name>
    </ligand>
</feature>
<feature type="binding site" evidence="1">
    <location>
        <position position="263"/>
    </location>
    <ligand>
        <name>substrate</name>
    </ligand>
</feature>
<feature type="modified residue" description="N6-carboxylysine" evidence="1">
    <location>
        <position position="99"/>
    </location>
</feature>
<dbReference type="EC" id="3.5.2.3" evidence="1"/>
<dbReference type="EMBL" id="CU459141">
    <property type="protein sequence ID" value="CAM87479.1"/>
    <property type="molecule type" value="Genomic_DNA"/>
</dbReference>
<dbReference type="RefSeq" id="WP_001084867.1">
    <property type="nucleotide sequence ID" value="NC_010410.1"/>
</dbReference>
<dbReference type="SMR" id="B0VAC1"/>
<dbReference type="EnsemblBacteria" id="CAM87479">
    <property type="protein sequence ID" value="CAM87479"/>
    <property type="gene ID" value="ABAYE2646"/>
</dbReference>
<dbReference type="GeneID" id="92795645"/>
<dbReference type="KEGG" id="aby:ABAYE2646"/>
<dbReference type="HOGENOM" id="CLU_041558_1_0_6"/>
<dbReference type="UniPathway" id="UPA00070">
    <property type="reaction ID" value="UER00117"/>
</dbReference>
<dbReference type="GO" id="GO:0005829">
    <property type="term" value="C:cytosol"/>
    <property type="evidence" value="ECO:0007669"/>
    <property type="project" value="TreeGrafter"/>
</dbReference>
<dbReference type="GO" id="GO:0004151">
    <property type="term" value="F:dihydroorotase activity"/>
    <property type="evidence" value="ECO:0007669"/>
    <property type="project" value="UniProtKB-UniRule"/>
</dbReference>
<dbReference type="GO" id="GO:0008270">
    <property type="term" value="F:zinc ion binding"/>
    <property type="evidence" value="ECO:0007669"/>
    <property type="project" value="UniProtKB-UniRule"/>
</dbReference>
<dbReference type="GO" id="GO:0006207">
    <property type="term" value="P:'de novo' pyrimidine nucleobase biosynthetic process"/>
    <property type="evidence" value="ECO:0007669"/>
    <property type="project" value="TreeGrafter"/>
</dbReference>
<dbReference type="GO" id="GO:0044205">
    <property type="term" value="P:'de novo' UMP biosynthetic process"/>
    <property type="evidence" value="ECO:0007669"/>
    <property type="project" value="UniProtKB-UniRule"/>
</dbReference>
<dbReference type="CDD" id="cd01294">
    <property type="entry name" value="DHOase"/>
    <property type="match status" value="1"/>
</dbReference>
<dbReference type="FunFam" id="3.20.20.140:FF:000006">
    <property type="entry name" value="Dihydroorotase"/>
    <property type="match status" value="1"/>
</dbReference>
<dbReference type="Gene3D" id="3.20.20.140">
    <property type="entry name" value="Metal-dependent hydrolases"/>
    <property type="match status" value="1"/>
</dbReference>
<dbReference type="HAMAP" id="MF_00219">
    <property type="entry name" value="PyrC_classII"/>
    <property type="match status" value="1"/>
</dbReference>
<dbReference type="InterPro" id="IPR006680">
    <property type="entry name" value="Amidohydro-rel"/>
</dbReference>
<dbReference type="InterPro" id="IPR004721">
    <property type="entry name" value="DHOdimr"/>
</dbReference>
<dbReference type="InterPro" id="IPR002195">
    <property type="entry name" value="Dihydroorotase_CS"/>
</dbReference>
<dbReference type="InterPro" id="IPR032466">
    <property type="entry name" value="Metal_Hydrolase"/>
</dbReference>
<dbReference type="NCBIfam" id="TIGR00856">
    <property type="entry name" value="pyrC_dimer"/>
    <property type="match status" value="1"/>
</dbReference>
<dbReference type="PANTHER" id="PTHR43137">
    <property type="entry name" value="DIHYDROOROTASE"/>
    <property type="match status" value="1"/>
</dbReference>
<dbReference type="PANTHER" id="PTHR43137:SF1">
    <property type="entry name" value="DIHYDROOROTASE"/>
    <property type="match status" value="1"/>
</dbReference>
<dbReference type="Pfam" id="PF01979">
    <property type="entry name" value="Amidohydro_1"/>
    <property type="match status" value="1"/>
</dbReference>
<dbReference type="PIRSF" id="PIRSF001237">
    <property type="entry name" value="DHOdimr"/>
    <property type="match status" value="1"/>
</dbReference>
<dbReference type="SUPFAM" id="SSF51556">
    <property type="entry name" value="Metallo-dependent hydrolases"/>
    <property type="match status" value="1"/>
</dbReference>
<dbReference type="PROSITE" id="PS00482">
    <property type="entry name" value="DIHYDROOROTASE_1"/>
    <property type="match status" value="1"/>
</dbReference>
<dbReference type="PROSITE" id="PS00483">
    <property type="entry name" value="DIHYDROOROTASE_2"/>
    <property type="match status" value="1"/>
</dbReference>
<organism>
    <name type="scientific">Acinetobacter baumannii (strain AYE)</name>
    <dbReference type="NCBI Taxonomy" id="509173"/>
    <lineage>
        <taxon>Bacteria</taxon>
        <taxon>Pseudomonadati</taxon>
        <taxon>Pseudomonadota</taxon>
        <taxon>Gammaproteobacteria</taxon>
        <taxon>Moraxellales</taxon>
        <taxon>Moraxellaceae</taxon>
        <taxon>Acinetobacter</taxon>
        <taxon>Acinetobacter calcoaceticus/baumannii complex</taxon>
    </lineage>
</organism>
<comment type="function">
    <text evidence="1">Catalyzes the reversible cyclization of carbamoyl aspartate to dihydroorotate.</text>
</comment>
<comment type="catalytic activity">
    <reaction evidence="1">
        <text>(S)-dihydroorotate + H2O = N-carbamoyl-L-aspartate + H(+)</text>
        <dbReference type="Rhea" id="RHEA:24296"/>
        <dbReference type="ChEBI" id="CHEBI:15377"/>
        <dbReference type="ChEBI" id="CHEBI:15378"/>
        <dbReference type="ChEBI" id="CHEBI:30864"/>
        <dbReference type="ChEBI" id="CHEBI:32814"/>
        <dbReference type="EC" id="3.5.2.3"/>
    </reaction>
</comment>
<comment type="cofactor">
    <cofactor evidence="1">
        <name>Zn(2+)</name>
        <dbReference type="ChEBI" id="CHEBI:29105"/>
    </cofactor>
    <text evidence="1">Binds 2 Zn(2+) ions per subunit.</text>
</comment>
<comment type="pathway">
    <text evidence="1">Pyrimidine metabolism; UMP biosynthesis via de novo pathway; (S)-dihydroorotate from bicarbonate: step 3/3.</text>
</comment>
<comment type="subunit">
    <text evidence="1">Homodimer.</text>
</comment>
<comment type="similarity">
    <text evidence="1">Belongs to the metallo-dependent hydrolases superfamily. DHOase family. Class II DHOase subfamily.</text>
</comment>
<reference key="1">
    <citation type="journal article" date="2008" name="PLoS ONE">
        <title>Comparative analysis of Acinetobacters: three genomes for three lifestyles.</title>
        <authorList>
            <person name="Vallenet D."/>
            <person name="Nordmann P."/>
            <person name="Barbe V."/>
            <person name="Poirel L."/>
            <person name="Mangenot S."/>
            <person name="Bataille E."/>
            <person name="Dossat C."/>
            <person name="Gas S."/>
            <person name="Kreimeyer A."/>
            <person name="Lenoble P."/>
            <person name="Oztas S."/>
            <person name="Poulain J."/>
            <person name="Segurens B."/>
            <person name="Robert C."/>
            <person name="Abergel C."/>
            <person name="Claverie J.-M."/>
            <person name="Raoult D."/>
            <person name="Medigue C."/>
            <person name="Weissenbach J."/>
            <person name="Cruveiller S."/>
        </authorList>
    </citation>
    <scope>NUCLEOTIDE SEQUENCE [LARGE SCALE GENOMIC DNA]</scope>
    <source>
        <strain>AYE</strain>
    </source>
</reference>
<gene>
    <name evidence="1" type="primary">pyrC</name>
    <name type="ordered locus">ABAYE2646</name>
</gene>
<accession>B0VAC1</accession>
<evidence type="ECO:0000255" key="1">
    <source>
        <dbReference type="HAMAP-Rule" id="MF_00219"/>
    </source>
</evidence>
<sequence>MNSITLLQPDDWHAHLRDGLALKRTVPDLAKQFARAICMPNLVPPVKTVEEALAYRERILAHVPEGNNFDPRMVLYFTDHTSPDEVRKIKESEHVNAIKLYPAGATTNSDNGVSDIRKVYAVIEQLEEHQVPLLLHGEVTHNHVDIFDREKRFLDEVLSPLLKQFPKLKVVLEHITTSDAAHFVLEQDRNVAATITPQHLLFNRNDMLVGGIKPHFYCLPILKRQTHQTTLLEVATSGNPKFFLGTDSAPHAQNAKENACGCAGCYSAPNAIELYAQAFDQVGKLERLEGFASHFGADFYGLPRNTSTITLVKEDNLVPESFDYLDNQKIIPLHAGKTLQWRKV</sequence>
<keyword id="KW-0378">Hydrolase</keyword>
<keyword id="KW-0479">Metal-binding</keyword>
<keyword id="KW-0665">Pyrimidine biosynthesis</keyword>
<keyword id="KW-0862">Zinc</keyword>